<sequence length="516" mass="58088">MSPIYTTLTLHLATALFLFFHVQKLVHYLHGKATGHRCRRLPPGPTGWPILGALPLLGNMPHVTFANMAKKYGSVMYLKVGSHGLAIASTPDAAKAFLKTLDLNFSNRPPNAGATHLAYNAQDMVFAHYGPKWKLLRKLSNLHMLGGKALENWADVRKTELGYMLKAMFESSQNNEPVMISEMLTYAMANMLSQVILSRRVFNKKGAKSNEFKDMVVELMTSAGYFNIGDFIPSIGWMDLQGIEGGMKRLHKKFDVLLTRLLDDHKRTSQERKQKPDFLDFVIANGDNSDGERLNTDNIKALLLNLFTAGTDTSSSIIEWALAELLKNRTLLTRAQDEMDRVIGRDRRLLESDIPNLPYLQAICKETFRKHPSTPLNLPRNCIRGHVDVNGYYIPKGTRLNVNIWAIGRDPSVWGDNPNEFDPERFLYGRNAKIDPRGNHFELIPFGAGRRICAGTRMGILLVEYILGTLVHSFDWKLGFSEDELNMDETFGLALQKAVPLAAMVIPRLPLHVYAP</sequence>
<comment type="function">
    <text evidence="2">Catalyzes the 3'5'-hydroxylation of naringenin and eriodictyol to form 5,7,3,'4',5'-pentahydroxyflavanone and 3',5'-hydroxylation of dihydrokaempferol and dihydroquercetin to form dihydromyricetin.</text>
</comment>
<comment type="catalytic activity">
    <reaction evidence="2">
        <text>a 3',5'-unsubstituted flavanone + 2 reduced [NADPH--hemoprotein reductase] + 2 O2 = a 3',5'-dihydroxyflavanone + 2 oxidized [NADPH--hemoprotein reductase] + 2 H2O + 2 H(+)</text>
        <dbReference type="Rhea" id="RHEA:55448"/>
        <dbReference type="Rhea" id="RHEA-COMP:11964"/>
        <dbReference type="Rhea" id="RHEA-COMP:11965"/>
        <dbReference type="ChEBI" id="CHEBI:15377"/>
        <dbReference type="ChEBI" id="CHEBI:15378"/>
        <dbReference type="ChEBI" id="CHEBI:15379"/>
        <dbReference type="ChEBI" id="CHEBI:48025"/>
        <dbReference type="ChEBI" id="CHEBI:57618"/>
        <dbReference type="ChEBI" id="CHEBI:58210"/>
        <dbReference type="ChEBI" id="CHEBI:138897"/>
        <dbReference type="EC" id="1.14.14.81"/>
    </reaction>
</comment>
<comment type="cofactor">
    <cofactor evidence="1">
        <name>heme</name>
        <dbReference type="ChEBI" id="CHEBI:30413"/>
    </cofactor>
</comment>
<comment type="pathway">
    <text>Pigment biosynthesis; anthocyanin biosynthesis.</text>
</comment>
<comment type="similarity">
    <text evidence="3">Belongs to the cytochrome P450 family.</text>
</comment>
<proteinExistence type="evidence at transcript level"/>
<gene>
    <name type="primary">CYP75A4</name>
</gene>
<keyword id="KW-0349">Heme</keyword>
<keyword id="KW-0408">Iron</keyword>
<keyword id="KW-0479">Metal-binding</keyword>
<keyword id="KW-0503">Monooxygenase</keyword>
<keyword id="KW-0521">NADP</keyword>
<keyword id="KW-0560">Oxidoreductase</keyword>
<dbReference type="EC" id="1.14.14.81" evidence="2"/>
<dbReference type="EMBL" id="D85184">
    <property type="protein sequence ID" value="BAA12735.1"/>
    <property type="molecule type" value="mRNA"/>
</dbReference>
<dbReference type="SMR" id="Q96581"/>
<dbReference type="BRENDA" id="1.14.14.81">
    <property type="organism ID" value="2412"/>
</dbReference>
<dbReference type="UniPathway" id="UPA00009"/>
<dbReference type="GO" id="GO:0033772">
    <property type="term" value="F:flavonoid 3',5'-hydroxylase activity"/>
    <property type="evidence" value="ECO:0007669"/>
    <property type="project" value="UniProtKB-EC"/>
</dbReference>
<dbReference type="GO" id="GO:0020037">
    <property type="term" value="F:heme binding"/>
    <property type="evidence" value="ECO:0007669"/>
    <property type="project" value="InterPro"/>
</dbReference>
<dbReference type="GO" id="GO:0005506">
    <property type="term" value="F:iron ion binding"/>
    <property type="evidence" value="ECO:0007669"/>
    <property type="project" value="InterPro"/>
</dbReference>
<dbReference type="GO" id="GO:0009718">
    <property type="term" value="P:anthocyanin-containing compound biosynthetic process"/>
    <property type="evidence" value="ECO:0007669"/>
    <property type="project" value="UniProtKB-UniPathway"/>
</dbReference>
<dbReference type="CDD" id="cd20657">
    <property type="entry name" value="CYP75"/>
    <property type="match status" value="1"/>
</dbReference>
<dbReference type="FunFam" id="1.10.630.10:FF:000111">
    <property type="entry name" value="Flavonoid 3',5'-hydroxylase 2"/>
    <property type="match status" value="1"/>
</dbReference>
<dbReference type="Gene3D" id="1.10.630.10">
    <property type="entry name" value="Cytochrome P450"/>
    <property type="match status" value="1"/>
</dbReference>
<dbReference type="InterPro" id="IPR001128">
    <property type="entry name" value="Cyt_P450"/>
</dbReference>
<dbReference type="InterPro" id="IPR017972">
    <property type="entry name" value="Cyt_P450_CS"/>
</dbReference>
<dbReference type="InterPro" id="IPR002401">
    <property type="entry name" value="Cyt_P450_E_grp-I"/>
</dbReference>
<dbReference type="InterPro" id="IPR036396">
    <property type="entry name" value="Cyt_P450_sf"/>
</dbReference>
<dbReference type="PANTHER" id="PTHR47944">
    <property type="entry name" value="CYTOCHROME P450 98A9"/>
    <property type="match status" value="1"/>
</dbReference>
<dbReference type="PANTHER" id="PTHR47944:SF18">
    <property type="entry name" value="FLAVONOID 3'-MONOOXYGENASE"/>
    <property type="match status" value="1"/>
</dbReference>
<dbReference type="Pfam" id="PF00067">
    <property type="entry name" value="p450"/>
    <property type="match status" value="1"/>
</dbReference>
<dbReference type="PRINTS" id="PR00463">
    <property type="entry name" value="EP450I"/>
</dbReference>
<dbReference type="PRINTS" id="PR00385">
    <property type="entry name" value="P450"/>
</dbReference>
<dbReference type="SUPFAM" id="SSF48264">
    <property type="entry name" value="Cytochrome P450"/>
    <property type="match status" value="1"/>
</dbReference>
<dbReference type="PROSITE" id="PS00086">
    <property type="entry name" value="CYTOCHROME_P450"/>
    <property type="match status" value="1"/>
</dbReference>
<reference key="1">
    <citation type="journal article" date="1996" name="Plant Cell Physiol.">
        <title>Molecular and biochemical characterization of three anthocyanin synthetic enzymes from Gentiana triflora.</title>
        <authorList>
            <person name="Tanaka Y."/>
            <person name="Yonekura K."/>
            <person name="Fukuchi-Mizutani M."/>
            <person name="Fukui Y."/>
            <person name="Fujiwara H."/>
            <person name="Ashikari T."/>
            <person name="Kusumi T."/>
        </authorList>
    </citation>
    <scope>NUCLEOTIDE SEQUENCE [MRNA]</scope>
    <source>
        <tissue>Petal</tissue>
    </source>
</reference>
<organism>
    <name type="scientific">Gentiana triflora</name>
    <name type="common">Clustered gentian</name>
    <dbReference type="NCBI Taxonomy" id="55190"/>
    <lineage>
        <taxon>Eukaryota</taxon>
        <taxon>Viridiplantae</taxon>
        <taxon>Streptophyta</taxon>
        <taxon>Embryophyta</taxon>
        <taxon>Tracheophyta</taxon>
        <taxon>Spermatophyta</taxon>
        <taxon>Magnoliopsida</taxon>
        <taxon>eudicotyledons</taxon>
        <taxon>Gunneridae</taxon>
        <taxon>Pentapetalae</taxon>
        <taxon>asterids</taxon>
        <taxon>lamiids</taxon>
        <taxon>Gentianales</taxon>
        <taxon>Gentianaceae</taxon>
        <taxon>Gentianeae</taxon>
        <taxon>Gentianinae</taxon>
        <taxon>Gentiana</taxon>
    </lineage>
</organism>
<feature type="chain" id="PRO_0000052132" description="Flavonoid 3',5'-hydroxylase">
    <location>
        <begin position="1"/>
        <end position="516"/>
    </location>
</feature>
<feature type="binding site" description="axial binding residue" evidence="1">
    <location>
        <position position="453"/>
    </location>
    <ligand>
        <name>heme</name>
        <dbReference type="ChEBI" id="CHEBI:30413"/>
    </ligand>
    <ligandPart>
        <name>Fe</name>
        <dbReference type="ChEBI" id="CHEBI:18248"/>
    </ligandPart>
</feature>
<accession>Q96581</accession>
<protein>
    <recommendedName>
        <fullName>Flavonoid 3',5'-hydroxylase</fullName>
        <shortName>F3'5'H</shortName>
        <ecNumber evidence="2">1.14.14.81</ecNumber>
    </recommendedName>
    <alternativeName>
        <fullName>Cytochrome P450 75A4</fullName>
    </alternativeName>
</protein>
<evidence type="ECO:0000250" key="1"/>
<evidence type="ECO:0000250" key="2">
    <source>
        <dbReference type="UniProtKB" id="P48418"/>
    </source>
</evidence>
<evidence type="ECO:0000305" key="3"/>
<name>C75A4_GENTR</name>